<feature type="peptide" id="PRO_0000421637" description="CAPA-Periviscerokinin-1" evidence="3">
    <location>
        <begin position="1"/>
        <end position="12"/>
    </location>
</feature>
<feature type="modified residue" description="Glycine amide" evidence="3">
    <location>
        <position position="12"/>
    </location>
</feature>
<evidence type="ECO:0000250" key="1">
    <source>
        <dbReference type="UniProtKB" id="P83923"/>
    </source>
</evidence>
<evidence type="ECO:0000255" key="2"/>
<evidence type="ECO:0000269" key="3">
    <source>
    </source>
</evidence>
<evidence type="ECO:0000303" key="4">
    <source>
    </source>
</evidence>
<evidence type="ECO:0000305" key="5"/>
<evidence type="ECO:0000305" key="6">
    <source>
    </source>
</evidence>
<keyword id="KW-0027">Amidation</keyword>
<keyword id="KW-0903">Direct protein sequencing</keyword>
<keyword id="KW-0527">Neuropeptide</keyword>
<keyword id="KW-0964">Secreted</keyword>
<protein>
    <recommendedName>
        <fullName evidence="4">CAPA-Periviscerokinin-1</fullName>
        <shortName evidence="4">CAPA-PVK-1</shortName>
    </recommendedName>
</protein>
<comment type="function">
    <text evidence="1">Mediates visceral muscle contractile activity (myotropic activity).</text>
</comment>
<comment type="subcellular location">
    <subcellularLocation>
        <location evidence="6">Secreted</location>
    </subcellularLocation>
</comment>
<comment type="similarity">
    <text evidence="2">Belongs to the periviscerokinin family.</text>
</comment>
<accession>B0M3E4</accession>
<sequence length="12" mass="1226">EAAGLIPFPRVG</sequence>
<reference evidence="5" key="1">
    <citation type="journal article" date="2012" name="Syst. Biol.">
        <title>Peptidomics-based phylogeny and biogeography of Mantophasmatodea (Hexapoda).</title>
        <authorList>
            <person name="Predel R."/>
            <person name="Neupert S."/>
            <person name="Huetteroth W."/>
            <person name="Kahnt J."/>
            <person name="Waidelich D."/>
            <person name="Roth S."/>
        </authorList>
    </citation>
    <scope>PROTEIN SEQUENCE</scope>
    <scope>AMIDATION AT GLY-12</scope>
    <source>
        <tissue evidence="3">Abdominal perisympathetic organs</tissue>
    </source>
</reference>
<dbReference type="GO" id="GO:0005576">
    <property type="term" value="C:extracellular region"/>
    <property type="evidence" value="ECO:0007669"/>
    <property type="project" value="UniProtKB-SubCell"/>
</dbReference>
<dbReference type="GO" id="GO:0007218">
    <property type="term" value="P:neuropeptide signaling pathway"/>
    <property type="evidence" value="ECO:0007669"/>
    <property type="project" value="UniProtKB-KW"/>
</dbReference>
<dbReference type="InterPro" id="IPR013231">
    <property type="entry name" value="Periviscerokinin"/>
</dbReference>
<dbReference type="Pfam" id="PF08259">
    <property type="entry name" value="Periviscerokin"/>
    <property type="match status" value="1"/>
</dbReference>
<name>PVK1_KARBO</name>
<organism>
    <name type="scientific">Karoophasma botterkloofense</name>
    <name type="common">Gladiator</name>
    <name type="synonym">Heel-walker</name>
    <dbReference type="NCBI Taxonomy" id="253132"/>
    <lineage>
        <taxon>Eukaryota</taxon>
        <taxon>Metazoa</taxon>
        <taxon>Ecdysozoa</taxon>
        <taxon>Arthropoda</taxon>
        <taxon>Hexapoda</taxon>
        <taxon>Insecta</taxon>
        <taxon>Pterygota</taxon>
        <taxon>Neoptera</taxon>
        <taxon>Polyneoptera</taxon>
        <taxon>Mantophasmatodea</taxon>
        <taxon>Austrophasmatidae</taxon>
        <taxon>Karoophasma</taxon>
    </lineage>
</organism>
<proteinExistence type="evidence at protein level"/>